<gene>
    <name evidence="1" type="primary">xseB</name>
    <name type="ordered locus">BALH_3787</name>
</gene>
<sequence>MENKLSFEEAISQLEHLVSKLEQGDVPLEEAISYFKEGMELSKLCDEKLKNVQEQMAVILGEDGELEPFTALGDEA</sequence>
<dbReference type="EC" id="3.1.11.6" evidence="1"/>
<dbReference type="EMBL" id="CP000485">
    <property type="protein sequence ID" value="ABK87014.1"/>
    <property type="molecule type" value="Genomic_DNA"/>
</dbReference>
<dbReference type="RefSeq" id="WP_000428423.1">
    <property type="nucleotide sequence ID" value="NC_008600.1"/>
</dbReference>
<dbReference type="SMR" id="A0RIH1"/>
<dbReference type="GeneID" id="93006923"/>
<dbReference type="KEGG" id="btl:BALH_3787"/>
<dbReference type="HOGENOM" id="CLU_145918_3_1_9"/>
<dbReference type="GO" id="GO:0005829">
    <property type="term" value="C:cytosol"/>
    <property type="evidence" value="ECO:0007669"/>
    <property type="project" value="TreeGrafter"/>
</dbReference>
<dbReference type="GO" id="GO:0009318">
    <property type="term" value="C:exodeoxyribonuclease VII complex"/>
    <property type="evidence" value="ECO:0007669"/>
    <property type="project" value="InterPro"/>
</dbReference>
<dbReference type="GO" id="GO:0008855">
    <property type="term" value="F:exodeoxyribonuclease VII activity"/>
    <property type="evidence" value="ECO:0007669"/>
    <property type="project" value="UniProtKB-UniRule"/>
</dbReference>
<dbReference type="GO" id="GO:0006308">
    <property type="term" value="P:DNA catabolic process"/>
    <property type="evidence" value="ECO:0007669"/>
    <property type="project" value="UniProtKB-UniRule"/>
</dbReference>
<dbReference type="FunFam" id="1.10.287.1040:FF:000002">
    <property type="entry name" value="Exodeoxyribonuclease 7 small subunit"/>
    <property type="match status" value="1"/>
</dbReference>
<dbReference type="Gene3D" id="1.10.287.1040">
    <property type="entry name" value="Exonuclease VII, small subunit"/>
    <property type="match status" value="1"/>
</dbReference>
<dbReference type="HAMAP" id="MF_00337">
    <property type="entry name" value="Exonuc_7_S"/>
    <property type="match status" value="1"/>
</dbReference>
<dbReference type="InterPro" id="IPR003761">
    <property type="entry name" value="Exonuc_VII_S"/>
</dbReference>
<dbReference type="InterPro" id="IPR037004">
    <property type="entry name" value="Exonuc_VII_ssu_sf"/>
</dbReference>
<dbReference type="NCBIfam" id="NF010666">
    <property type="entry name" value="PRK14063.1"/>
    <property type="match status" value="1"/>
</dbReference>
<dbReference type="NCBIfam" id="TIGR01280">
    <property type="entry name" value="xseB"/>
    <property type="match status" value="1"/>
</dbReference>
<dbReference type="PANTHER" id="PTHR34137">
    <property type="entry name" value="EXODEOXYRIBONUCLEASE 7 SMALL SUBUNIT"/>
    <property type="match status" value="1"/>
</dbReference>
<dbReference type="PANTHER" id="PTHR34137:SF1">
    <property type="entry name" value="EXODEOXYRIBONUCLEASE 7 SMALL SUBUNIT"/>
    <property type="match status" value="1"/>
</dbReference>
<dbReference type="Pfam" id="PF02609">
    <property type="entry name" value="Exonuc_VII_S"/>
    <property type="match status" value="1"/>
</dbReference>
<dbReference type="PIRSF" id="PIRSF006488">
    <property type="entry name" value="Exonuc_VII_S"/>
    <property type="match status" value="1"/>
</dbReference>
<dbReference type="SUPFAM" id="SSF116842">
    <property type="entry name" value="XseB-like"/>
    <property type="match status" value="1"/>
</dbReference>
<evidence type="ECO:0000255" key="1">
    <source>
        <dbReference type="HAMAP-Rule" id="MF_00337"/>
    </source>
</evidence>
<reference key="1">
    <citation type="journal article" date="2007" name="J. Bacteriol.">
        <title>The complete genome sequence of Bacillus thuringiensis Al Hakam.</title>
        <authorList>
            <person name="Challacombe J.F."/>
            <person name="Altherr M.R."/>
            <person name="Xie G."/>
            <person name="Bhotika S.S."/>
            <person name="Brown N."/>
            <person name="Bruce D."/>
            <person name="Campbell C.S."/>
            <person name="Campbell M.L."/>
            <person name="Chen J."/>
            <person name="Chertkov O."/>
            <person name="Cleland C."/>
            <person name="Dimitrijevic M."/>
            <person name="Doggett N.A."/>
            <person name="Fawcett J.J."/>
            <person name="Glavina T."/>
            <person name="Goodwin L.A."/>
            <person name="Green L.D."/>
            <person name="Han C.S."/>
            <person name="Hill K.K."/>
            <person name="Hitchcock P."/>
            <person name="Jackson P.J."/>
            <person name="Keim P."/>
            <person name="Kewalramani A.R."/>
            <person name="Longmire J."/>
            <person name="Lucas S."/>
            <person name="Malfatti S."/>
            <person name="Martinez D."/>
            <person name="McMurry K."/>
            <person name="Meincke L.J."/>
            <person name="Misra M."/>
            <person name="Moseman B.L."/>
            <person name="Mundt M."/>
            <person name="Munk A.C."/>
            <person name="Okinaka R.T."/>
            <person name="Parson-Quintana B."/>
            <person name="Reilly L.P."/>
            <person name="Richardson P."/>
            <person name="Robinson D.L."/>
            <person name="Saunders E."/>
            <person name="Tapia R."/>
            <person name="Tesmer J.G."/>
            <person name="Thayer N."/>
            <person name="Thompson L.S."/>
            <person name="Tice H."/>
            <person name="Ticknor L.O."/>
            <person name="Wills P.L."/>
            <person name="Gilna P."/>
            <person name="Brettin T.S."/>
        </authorList>
    </citation>
    <scope>NUCLEOTIDE SEQUENCE [LARGE SCALE GENOMIC DNA]</scope>
    <source>
        <strain>Al Hakam</strain>
    </source>
</reference>
<name>EX7S_BACAH</name>
<proteinExistence type="inferred from homology"/>
<accession>A0RIH1</accession>
<organism>
    <name type="scientific">Bacillus thuringiensis (strain Al Hakam)</name>
    <dbReference type="NCBI Taxonomy" id="412694"/>
    <lineage>
        <taxon>Bacteria</taxon>
        <taxon>Bacillati</taxon>
        <taxon>Bacillota</taxon>
        <taxon>Bacilli</taxon>
        <taxon>Bacillales</taxon>
        <taxon>Bacillaceae</taxon>
        <taxon>Bacillus</taxon>
        <taxon>Bacillus cereus group</taxon>
    </lineage>
</organism>
<comment type="function">
    <text evidence="1">Bidirectionally degrades single-stranded DNA into large acid-insoluble oligonucleotides, which are then degraded further into small acid-soluble oligonucleotides.</text>
</comment>
<comment type="catalytic activity">
    <reaction evidence="1">
        <text>Exonucleolytic cleavage in either 5'- to 3'- or 3'- to 5'-direction to yield nucleoside 5'-phosphates.</text>
        <dbReference type="EC" id="3.1.11.6"/>
    </reaction>
</comment>
<comment type="subunit">
    <text evidence="1">Heterooligomer composed of large and small subunits.</text>
</comment>
<comment type="subcellular location">
    <subcellularLocation>
        <location evidence="1">Cytoplasm</location>
    </subcellularLocation>
</comment>
<comment type="similarity">
    <text evidence="1">Belongs to the XseB family.</text>
</comment>
<feature type="chain" id="PRO_0000303689" description="Exodeoxyribonuclease 7 small subunit">
    <location>
        <begin position="1"/>
        <end position="76"/>
    </location>
</feature>
<keyword id="KW-0963">Cytoplasm</keyword>
<keyword id="KW-0269">Exonuclease</keyword>
<keyword id="KW-0378">Hydrolase</keyword>
<keyword id="KW-0540">Nuclease</keyword>
<protein>
    <recommendedName>
        <fullName evidence="1">Exodeoxyribonuclease 7 small subunit</fullName>
        <ecNumber evidence="1">3.1.11.6</ecNumber>
    </recommendedName>
    <alternativeName>
        <fullName evidence="1">Exodeoxyribonuclease VII small subunit</fullName>
        <shortName evidence="1">Exonuclease VII small subunit</shortName>
    </alternativeName>
</protein>